<dbReference type="EC" id="2.7.2.2"/>
<dbReference type="EMBL" id="BA000018">
    <property type="protein sequence ID" value="BAB43730.1"/>
    <property type="status" value="ALT_INIT"/>
    <property type="molecule type" value="Genomic_DNA"/>
</dbReference>
<dbReference type="PIR" id="H90070">
    <property type="entry name" value="H90070"/>
</dbReference>
<dbReference type="SMR" id="P99069"/>
<dbReference type="EnsemblBacteria" id="BAB43730">
    <property type="protein sequence ID" value="BAB43730"/>
    <property type="gene ID" value="BAB43730"/>
</dbReference>
<dbReference type="KEGG" id="sau:SA2425"/>
<dbReference type="HOGENOM" id="CLU_076278_0_0_9"/>
<dbReference type="UniPathway" id="UPA00996">
    <property type="reaction ID" value="UER00366"/>
</dbReference>
<dbReference type="GO" id="GO:0005829">
    <property type="term" value="C:cytosol"/>
    <property type="evidence" value="ECO:0007669"/>
    <property type="project" value="TreeGrafter"/>
</dbReference>
<dbReference type="GO" id="GO:0005524">
    <property type="term" value="F:ATP binding"/>
    <property type="evidence" value="ECO:0007669"/>
    <property type="project" value="UniProtKB-KW"/>
</dbReference>
<dbReference type="GO" id="GO:0008804">
    <property type="term" value="F:carbamate kinase activity"/>
    <property type="evidence" value="ECO:0007669"/>
    <property type="project" value="UniProtKB-EC"/>
</dbReference>
<dbReference type="GO" id="GO:0019546">
    <property type="term" value="P:arginine deiminase pathway"/>
    <property type="evidence" value="ECO:0007669"/>
    <property type="project" value="TreeGrafter"/>
</dbReference>
<dbReference type="CDD" id="cd04235">
    <property type="entry name" value="AAK_CK"/>
    <property type="match status" value="1"/>
</dbReference>
<dbReference type="FunFam" id="3.40.1160.10:FF:000007">
    <property type="entry name" value="Carbamate kinase"/>
    <property type="match status" value="1"/>
</dbReference>
<dbReference type="Gene3D" id="3.40.1160.10">
    <property type="entry name" value="Acetylglutamate kinase-like"/>
    <property type="match status" value="1"/>
</dbReference>
<dbReference type="InterPro" id="IPR036393">
    <property type="entry name" value="AceGlu_kinase-like_sf"/>
</dbReference>
<dbReference type="InterPro" id="IPR001048">
    <property type="entry name" value="Asp/Glu/Uridylate_kinase"/>
</dbReference>
<dbReference type="InterPro" id="IPR003964">
    <property type="entry name" value="Carb_kinase"/>
</dbReference>
<dbReference type="NCBIfam" id="TIGR00746">
    <property type="entry name" value="arcC"/>
    <property type="match status" value="1"/>
</dbReference>
<dbReference type="NCBIfam" id="NF009007">
    <property type="entry name" value="PRK12352.1"/>
    <property type="match status" value="1"/>
</dbReference>
<dbReference type="PANTHER" id="PTHR30409">
    <property type="entry name" value="CARBAMATE KINASE"/>
    <property type="match status" value="1"/>
</dbReference>
<dbReference type="PANTHER" id="PTHR30409:SF1">
    <property type="entry name" value="CARBAMATE KINASE-RELATED"/>
    <property type="match status" value="1"/>
</dbReference>
<dbReference type="Pfam" id="PF00696">
    <property type="entry name" value="AA_kinase"/>
    <property type="match status" value="1"/>
</dbReference>
<dbReference type="PIRSF" id="PIRSF000723">
    <property type="entry name" value="Carbamate_kin"/>
    <property type="match status" value="1"/>
</dbReference>
<dbReference type="PRINTS" id="PR01469">
    <property type="entry name" value="CARBMTKINASE"/>
</dbReference>
<dbReference type="SUPFAM" id="SSF53633">
    <property type="entry name" value="Carbamate kinase-like"/>
    <property type="match status" value="1"/>
</dbReference>
<reference key="1">
    <citation type="journal article" date="2001" name="Lancet">
        <title>Whole genome sequencing of meticillin-resistant Staphylococcus aureus.</title>
        <authorList>
            <person name="Kuroda M."/>
            <person name="Ohta T."/>
            <person name="Uchiyama I."/>
            <person name="Baba T."/>
            <person name="Yuzawa H."/>
            <person name="Kobayashi I."/>
            <person name="Cui L."/>
            <person name="Oguchi A."/>
            <person name="Aoki K."/>
            <person name="Nagai Y."/>
            <person name="Lian J.-Q."/>
            <person name="Ito T."/>
            <person name="Kanamori M."/>
            <person name="Matsumaru H."/>
            <person name="Maruyama A."/>
            <person name="Murakami H."/>
            <person name="Hosoyama A."/>
            <person name="Mizutani-Ui Y."/>
            <person name="Takahashi N.K."/>
            <person name="Sawano T."/>
            <person name="Inoue R."/>
            <person name="Kaito C."/>
            <person name="Sekimizu K."/>
            <person name="Hirakawa H."/>
            <person name="Kuhara S."/>
            <person name="Goto S."/>
            <person name="Yabuzaki J."/>
            <person name="Kanehisa M."/>
            <person name="Yamashita A."/>
            <person name="Oshima K."/>
            <person name="Furuya K."/>
            <person name="Yoshino C."/>
            <person name="Shiba T."/>
            <person name="Hattori M."/>
            <person name="Ogasawara N."/>
            <person name="Hayashi H."/>
            <person name="Hiramatsu K."/>
        </authorList>
    </citation>
    <scope>NUCLEOTIDE SEQUENCE [LARGE SCALE GENOMIC DNA]</scope>
    <source>
        <strain>N315</strain>
    </source>
</reference>
<reference key="2">
    <citation type="journal article" date="2005" name="J. Microbiol. Methods">
        <title>Correlation of proteomic and transcriptomic profiles of Staphylococcus aureus during the post-exponential phase of growth.</title>
        <authorList>
            <person name="Scherl A."/>
            <person name="Francois P."/>
            <person name="Bento M."/>
            <person name="Deshusses J.M."/>
            <person name="Charbonnier Y."/>
            <person name="Converset V."/>
            <person name="Huyghe A."/>
            <person name="Walter N."/>
            <person name="Hoogland C."/>
            <person name="Appel R.D."/>
            <person name="Sanchez J.-C."/>
            <person name="Zimmermann-Ivol C.G."/>
            <person name="Corthals G.L."/>
            <person name="Hochstrasser D.F."/>
            <person name="Schrenzel J."/>
        </authorList>
    </citation>
    <scope>IDENTIFICATION BY MASS SPECTROMETRY</scope>
    <source>
        <strain>N315</strain>
    </source>
</reference>
<reference key="3">
    <citation type="submission" date="2007-10" db="UniProtKB">
        <title>Shotgun proteomic analysis of total and membrane protein extracts of S. aureus strain N315.</title>
        <authorList>
            <person name="Vaezzadeh A.R."/>
            <person name="Deshusses J."/>
            <person name="Lescuyer P."/>
            <person name="Hochstrasser D.F."/>
        </authorList>
    </citation>
    <scope>IDENTIFICATION BY MASS SPECTROMETRY [LARGE SCALE ANALYSIS]</scope>
    <source>
        <strain>N315</strain>
    </source>
</reference>
<feature type="chain" id="PRO_0000185134" description="Carbamate kinase 2">
    <location>
        <begin position="1"/>
        <end position="313"/>
    </location>
</feature>
<comment type="catalytic activity">
    <reaction>
        <text>hydrogencarbonate + NH4(+) + ATP = carbamoyl phosphate + ADP + H2O + H(+)</text>
        <dbReference type="Rhea" id="RHEA:10152"/>
        <dbReference type="ChEBI" id="CHEBI:15377"/>
        <dbReference type="ChEBI" id="CHEBI:15378"/>
        <dbReference type="ChEBI" id="CHEBI:17544"/>
        <dbReference type="ChEBI" id="CHEBI:28938"/>
        <dbReference type="ChEBI" id="CHEBI:30616"/>
        <dbReference type="ChEBI" id="CHEBI:58228"/>
        <dbReference type="ChEBI" id="CHEBI:456216"/>
        <dbReference type="EC" id="2.7.2.2"/>
    </reaction>
</comment>
<comment type="pathway">
    <text>Metabolic intermediate metabolism; carbamoyl phosphate degradation; CO(2) and NH(3) from carbamoyl phosphate: step 1/1.</text>
</comment>
<comment type="subcellular location">
    <subcellularLocation>
        <location evidence="1">Cytoplasm</location>
    </subcellularLocation>
</comment>
<comment type="similarity">
    <text evidence="1">Belongs to the carbamate kinase family.</text>
</comment>
<comment type="sequence caution" evidence="1">
    <conflict type="erroneous initiation">
        <sequence resource="EMBL-CDS" id="BAB43730"/>
    </conflict>
</comment>
<gene>
    <name type="primary">arcC2</name>
    <name type="ordered locus">SA2425</name>
</gene>
<name>ARCC2_STAAN</name>
<accession>P99069</accession>
<accession>Q99R05</accession>
<keyword id="KW-0056">Arginine metabolism</keyword>
<keyword id="KW-0067">ATP-binding</keyword>
<keyword id="KW-0963">Cytoplasm</keyword>
<keyword id="KW-0418">Kinase</keyword>
<keyword id="KW-0547">Nucleotide-binding</keyword>
<keyword id="KW-0808">Transferase</keyword>
<sequence>MKEKIVIALGGNAIQTKEATAEAQQTAIRRAMQNLKPLFDSPARIVISHGNGPQIGSLLIQQAKSNSDTTPAMPLDTCGAMSQGMIGYWLETEINRILTEMNSDRTVGTIVTRVEVDKDDPRFNNPTKPIGPFYTKEEVEELQKEQPDSVFKEDAGRGYRKVVASPLPQSILEHQLIRTLADGKNIVIACGGGGIPVIKKENTYEGVEAVIDKDFASEKLATLIEADTLMILTNVENVFINFNEPNQQQIDDIDVATLKKYAAQGKFAEGSMLPKIEAAIRFVESGENKKVIITNLEQAYEALIGNKGTHIHM</sequence>
<organism>
    <name type="scientific">Staphylococcus aureus (strain N315)</name>
    <dbReference type="NCBI Taxonomy" id="158879"/>
    <lineage>
        <taxon>Bacteria</taxon>
        <taxon>Bacillati</taxon>
        <taxon>Bacillota</taxon>
        <taxon>Bacilli</taxon>
        <taxon>Bacillales</taxon>
        <taxon>Staphylococcaceae</taxon>
        <taxon>Staphylococcus</taxon>
    </lineage>
</organism>
<evidence type="ECO:0000305" key="1"/>
<proteinExistence type="evidence at protein level"/>
<protein>
    <recommendedName>
        <fullName>Carbamate kinase 2</fullName>
        <ecNumber>2.7.2.2</ecNumber>
    </recommendedName>
</protein>